<evidence type="ECO:0000255" key="1">
    <source>
        <dbReference type="HAMAP-Rule" id="MF_01358"/>
    </source>
</evidence>
<name>NUOD2_BEII9</name>
<dbReference type="EC" id="7.1.1.-" evidence="1"/>
<dbReference type="EMBL" id="CP001017">
    <property type="protein sequence ID" value="ACB97367.1"/>
    <property type="molecule type" value="Genomic_DNA"/>
</dbReference>
<dbReference type="RefSeq" id="WP_012382980.1">
    <property type="nucleotide sequence ID" value="NC_010580.1"/>
</dbReference>
<dbReference type="SMR" id="B2ILG7"/>
<dbReference type="KEGG" id="bid:Bind_3834"/>
<dbReference type="HOGENOM" id="CLU_015134_1_1_5"/>
<dbReference type="OrthoDB" id="9801496at2"/>
<dbReference type="Proteomes" id="UP000001695">
    <property type="component" value="Plasmid pBIND01"/>
</dbReference>
<dbReference type="GO" id="GO:0005886">
    <property type="term" value="C:plasma membrane"/>
    <property type="evidence" value="ECO:0007669"/>
    <property type="project" value="UniProtKB-SubCell"/>
</dbReference>
<dbReference type="GO" id="GO:0051287">
    <property type="term" value="F:NAD binding"/>
    <property type="evidence" value="ECO:0007669"/>
    <property type="project" value="InterPro"/>
</dbReference>
<dbReference type="GO" id="GO:0050136">
    <property type="term" value="F:NADH:ubiquinone reductase (non-electrogenic) activity"/>
    <property type="evidence" value="ECO:0007669"/>
    <property type="project" value="UniProtKB-UniRule"/>
</dbReference>
<dbReference type="GO" id="GO:0048038">
    <property type="term" value="F:quinone binding"/>
    <property type="evidence" value="ECO:0007669"/>
    <property type="project" value="UniProtKB-KW"/>
</dbReference>
<dbReference type="FunFam" id="1.10.645.10:FF:000005">
    <property type="entry name" value="NADH-quinone oxidoreductase subunit D"/>
    <property type="match status" value="1"/>
</dbReference>
<dbReference type="Gene3D" id="1.10.645.10">
    <property type="entry name" value="Cytochrome-c3 Hydrogenase, chain B"/>
    <property type="match status" value="1"/>
</dbReference>
<dbReference type="HAMAP" id="MF_01358">
    <property type="entry name" value="NDH1_NuoD"/>
    <property type="match status" value="1"/>
</dbReference>
<dbReference type="InterPro" id="IPR001135">
    <property type="entry name" value="NADH_Q_OxRdtase_suD"/>
</dbReference>
<dbReference type="InterPro" id="IPR014029">
    <property type="entry name" value="NADH_UbQ_OxRdtase_49kDa_CS"/>
</dbReference>
<dbReference type="InterPro" id="IPR022885">
    <property type="entry name" value="NDH1_su_D/H"/>
</dbReference>
<dbReference type="InterPro" id="IPR029014">
    <property type="entry name" value="NiFe-Hase_large"/>
</dbReference>
<dbReference type="NCBIfam" id="TIGR01962">
    <property type="entry name" value="NuoD"/>
    <property type="match status" value="1"/>
</dbReference>
<dbReference type="NCBIfam" id="NF004739">
    <property type="entry name" value="PRK06075.1"/>
    <property type="match status" value="1"/>
</dbReference>
<dbReference type="PANTHER" id="PTHR11993:SF10">
    <property type="entry name" value="NADH DEHYDROGENASE [UBIQUINONE] IRON-SULFUR PROTEIN 2, MITOCHONDRIAL"/>
    <property type="match status" value="1"/>
</dbReference>
<dbReference type="PANTHER" id="PTHR11993">
    <property type="entry name" value="NADH-UBIQUINONE OXIDOREDUCTASE 49 KDA SUBUNIT"/>
    <property type="match status" value="1"/>
</dbReference>
<dbReference type="Pfam" id="PF00346">
    <property type="entry name" value="Complex1_49kDa"/>
    <property type="match status" value="1"/>
</dbReference>
<dbReference type="SUPFAM" id="SSF56762">
    <property type="entry name" value="HydB/Nqo4-like"/>
    <property type="match status" value="1"/>
</dbReference>
<dbReference type="PROSITE" id="PS00535">
    <property type="entry name" value="COMPLEX1_49K"/>
    <property type="match status" value="1"/>
</dbReference>
<sequence length="396" mass="45300">MDEAGFRNFTVNFGPQHPAAHGVLRLVLELDGEVVERADPHIGLLHRGTEKLIEYRTYLQALPYFDRLDYVAPMNQEHAFCLAIEKLLQMPVPRRGQLIRVLFCEIGRLLSHLLNITTQALDIGALTPPLWGFEEREKLMVFYERASGARMHANYFRVGGVHQDLPEKLLDDIWNFCEPFLKVCNDLEELLSYNRIFKQRNVDVGVISLDEAWTRGFSGVMVRGSGAAWDLRKAQPYECYDELQFDIPVGKHGDCYDRYLIRMEEMRQSVRIMKQCLEKLSSVDGKGPIIEQNHKVTPPRRSEMKRSMEALIQHFKLYTEGHHVPAGEVYAAVEAPKGEFGVYLISDGSNIPYRCKIRAPSFAHLQAIDFLSHKHMLADVSAIIGSLDIVFGEIDR</sequence>
<comment type="function">
    <text evidence="1">NDH-1 shuttles electrons from NADH, via FMN and iron-sulfur (Fe-S) centers, to quinones in the respiratory chain. The immediate electron acceptor for the enzyme in this species is believed to be ubiquinone. Couples the redox reaction to proton translocation (for every two electrons transferred, four hydrogen ions are translocated across the cytoplasmic membrane), and thus conserves the redox energy in a proton gradient.</text>
</comment>
<comment type="catalytic activity">
    <reaction evidence="1">
        <text>a quinone + NADH + 5 H(+)(in) = a quinol + NAD(+) + 4 H(+)(out)</text>
        <dbReference type="Rhea" id="RHEA:57888"/>
        <dbReference type="ChEBI" id="CHEBI:15378"/>
        <dbReference type="ChEBI" id="CHEBI:24646"/>
        <dbReference type="ChEBI" id="CHEBI:57540"/>
        <dbReference type="ChEBI" id="CHEBI:57945"/>
        <dbReference type="ChEBI" id="CHEBI:132124"/>
    </reaction>
</comment>
<comment type="subunit">
    <text evidence="1">NDH-1 is composed of 14 different subunits. Subunits NuoB, C, D, E, F, and G constitute the peripheral sector of the complex.</text>
</comment>
<comment type="subcellular location">
    <subcellularLocation>
        <location evidence="1">Cell inner membrane</location>
        <topology evidence="1">Peripheral membrane protein</topology>
        <orientation evidence="1">Cytoplasmic side</orientation>
    </subcellularLocation>
</comment>
<comment type="similarity">
    <text evidence="1">Belongs to the complex I 49 kDa subunit family.</text>
</comment>
<accession>B2ILG7</accession>
<geneLocation type="plasmid">
    <name>pBIND01</name>
</geneLocation>
<feature type="chain" id="PRO_0000357776" description="NADH-quinone oxidoreductase subunit D 2">
    <location>
        <begin position="1"/>
        <end position="396"/>
    </location>
</feature>
<protein>
    <recommendedName>
        <fullName evidence="1">NADH-quinone oxidoreductase subunit D 2</fullName>
        <ecNumber evidence="1">7.1.1.-</ecNumber>
    </recommendedName>
    <alternativeName>
        <fullName evidence="1">NADH dehydrogenase I subunit D 2</fullName>
    </alternativeName>
    <alternativeName>
        <fullName evidence="1">NDH-1 subunit D 2</fullName>
    </alternativeName>
</protein>
<proteinExistence type="inferred from homology"/>
<gene>
    <name evidence="1" type="primary">nuoD2</name>
    <name type="ordered locus">Bind_3834</name>
</gene>
<organism>
    <name type="scientific">Beijerinckia indica subsp. indica (strain ATCC 9039 / DSM 1715 / NCIMB 8712)</name>
    <dbReference type="NCBI Taxonomy" id="395963"/>
    <lineage>
        <taxon>Bacteria</taxon>
        <taxon>Pseudomonadati</taxon>
        <taxon>Pseudomonadota</taxon>
        <taxon>Alphaproteobacteria</taxon>
        <taxon>Hyphomicrobiales</taxon>
        <taxon>Beijerinckiaceae</taxon>
        <taxon>Beijerinckia</taxon>
    </lineage>
</organism>
<keyword id="KW-0997">Cell inner membrane</keyword>
<keyword id="KW-1003">Cell membrane</keyword>
<keyword id="KW-0472">Membrane</keyword>
<keyword id="KW-0520">NAD</keyword>
<keyword id="KW-0614">Plasmid</keyword>
<keyword id="KW-0874">Quinone</keyword>
<keyword id="KW-1185">Reference proteome</keyword>
<keyword id="KW-1278">Translocase</keyword>
<keyword id="KW-0813">Transport</keyword>
<keyword id="KW-0830">Ubiquinone</keyword>
<reference key="1">
    <citation type="journal article" date="2010" name="J. Bacteriol.">
        <title>Complete genome sequence of Beijerinckia indica subsp. indica.</title>
        <authorList>
            <person name="Tamas I."/>
            <person name="Dedysh S.N."/>
            <person name="Liesack W."/>
            <person name="Stott M.B."/>
            <person name="Alam M."/>
            <person name="Murrell J.C."/>
            <person name="Dunfield P.F."/>
        </authorList>
    </citation>
    <scope>NUCLEOTIDE SEQUENCE [LARGE SCALE GENOMIC DNA]</scope>
    <source>
        <strain>ATCC 9039 / DSM 1715 / NCIMB 8712</strain>
    </source>
</reference>